<feature type="chain" id="PRO_1000195990" description="Large ribosomal subunit protein bL32">
    <location>
        <begin position="1"/>
        <end position="60"/>
    </location>
</feature>
<name>RL32_PERMH</name>
<gene>
    <name evidence="1" type="primary">rpmF</name>
    <name type="ordered locus">PERMA_0764</name>
</gene>
<keyword id="KW-1185">Reference proteome</keyword>
<keyword id="KW-0687">Ribonucleoprotein</keyword>
<keyword id="KW-0689">Ribosomal protein</keyword>
<proteinExistence type="inferred from homology"/>
<evidence type="ECO:0000255" key="1">
    <source>
        <dbReference type="HAMAP-Rule" id="MF_00340"/>
    </source>
</evidence>
<evidence type="ECO:0000305" key="2"/>
<comment type="similarity">
    <text evidence="1">Belongs to the bacterial ribosomal protein bL32 family.</text>
</comment>
<reference key="1">
    <citation type="journal article" date="2009" name="J. Bacteriol.">
        <title>Complete and draft genome sequences of six members of the Aquificales.</title>
        <authorList>
            <person name="Reysenbach A.-L."/>
            <person name="Hamamura N."/>
            <person name="Podar M."/>
            <person name="Griffiths E."/>
            <person name="Ferreira S."/>
            <person name="Hochstein R."/>
            <person name="Heidelberg J."/>
            <person name="Johnson J."/>
            <person name="Mead D."/>
            <person name="Pohorille A."/>
            <person name="Sarmiento M."/>
            <person name="Schweighofer K."/>
            <person name="Seshadri R."/>
            <person name="Voytek M.A."/>
        </authorList>
    </citation>
    <scope>NUCLEOTIDE SEQUENCE [LARGE SCALE GENOMIC DNA]</scope>
    <source>
        <strain>DSM 14350 / EX-H1</strain>
    </source>
</reference>
<sequence length="60" mass="6797">MAAPKRKKSKAKTAMRKAQWMRKLTVPGLSLCPECGQPKTPHRVCPHCGYYKDKEVVEVV</sequence>
<accession>C0QPF6</accession>
<dbReference type="EMBL" id="CP001230">
    <property type="protein sequence ID" value="ACO03949.1"/>
    <property type="molecule type" value="Genomic_DNA"/>
</dbReference>
<dbReference type="RefSeq" id="WP_012676188.1">
    <property type="nucleotide sequence ID" value="NC_012440.1"/>
</dbReference>
<dbReference type="SMR" id="C0QPF6"/>
<dbReference type="STRING" id="123214.PERMA_0764"/>
<dbReference type="PaxDb" id="123214-PERMA_0764"/>
<dbReference type="KEGG" id="pmx:PERMA_0764"/>
<dbReference type="eggNOG" id="COG0333">
    <property type="taxonomic scope" value="Bacteria"/>
</dbReference>
<dbReference type="HOGENOM" id="CLU_129084_1_3_0"/>
<dbReference type="OrthoDB" id="9812874at2"/>
<dbReference type="Proteomes" id="UP000001366">
    <property type="component" value="Chromosome"/>
</dbReference>
<dbReference type="GO" id="GO:0015934">
    <property type="term" value="C:large ribosomal subunit"/>
    <property type="evidence" value="ECO:0007669"/>
    <property type="project" value="InterPro"/>
</dbReference>
<dbReference type="GO" id="GO:0003735">
    <property type="term" value="F:structural constituent of ribosome"/>
    <property type="evidence" value="ECO:0007669"/>
    <property type="project" value="InterPro"/>
</dbReference>
<dbReference type="GO" id="GO:0006412">
    <property type="term" value="P:translation"/>
    <property type="evidence" value="ECO:0007669"/>
    <property type="project" value="UniProtKB-UniRule"/>
</dbReference>
<dbReference type="HAMAP" id="MF_00340">
    <property type="entry name" value="Ribosomal_bL32"/>
    <property type="match status" value="1"/>
</dbReference>
<dbReference type="InterPro" id="IPR002677">
    <property type="entry name" value="Ribosomal_bL32"/>
</dbReference>
<dbReference type="InterPro" id="IPR044957">
    <property type="entry name" value="Ribosomal_bL32_bact"/>
</dbReference>
<dbReference type="InterPro" id="IPR011332">
    <property type="entry name" value="Ribosomal_zn-bd"/>
</dbReference>
<dbReference type="NCBIfam" id="TIGR01031">
    <property type="entry name" value="rpmF_bact"/>
    <property type="match status" value="1"/>
</dbReference>
<dbReference type="PANTHER" id="PTHR35534">
    <property type="entry name" value="50S RIBOSOMAL PROTEIN L32"/>
    <property type="match status" value="1"/>
</dbReference>
<dbReference type="PANTHER" id="PTHR35534:SF1">
    <property type="entry name" value="LARGE RIBOSOMAL SUBUNIT PROTEIN BL32"/>
    <property type="match status" value="1"/>
</dbReference>
<dbReference type="Pfam" id="PF01783">
    <property type="entry name" value="Ribosomal_L32p"/>
    <property type="match status" value="1"/>
</dbReference>
<dbReference type="SUPFAM" id="SSF57829">
    <property type="entry name" value="Zn-binding ribosomal proteins"/>
    <property type="match status" value="1"/>
</dbReference>
<protein>
    <recommendedName>
        <fullName evidence="1">Large ribosomal subunit protein bL32</fullName>
    </recommendedName>
    <alternativeName>
        <fullName evidence="2">50S ribosomal protein L32</fullName>
    </alternativeName>
</protein>
<organism>
    <name type="scientific">Persephonella marina (strain DSM 14350 / EX-H1)</name>
    <dbReference type="NCBI Taxonomy" id="123214"/>
    <lineage>
        <taxon>Bacteria</taxon>
        <taxon>Pseudomonadati</taxon>
        <taxon>Aquificota</taxon>
        <taxon>Aquificia</taxon>
        <taxon>Aquificales</taxon>
        <taxon>Hydrogenothermaceae</taxon>
        <taxon>Persephonella</taxon>
    </lineage>
</organism>